<accession>Q9Y264</accession>
<accession>B4E3J9</accession>
<accession>Q5TFF4</accession>
<accession>Q9H4Z4</accession>
<gene>
    <name type="primary">ANGPT4</name>
    <name type="synonym">ANG3</name>
    <name type="synonym">ANG4</name>
</gene>
<protein>
    <recommendedName>
        <fullName>Angiopoietin-4</fullName>
        <shortName>ANG-4</shortName>
    </recommendedName>
    <alternativeName>
        <fullName>Angiopoietin-3</fullName>
        <shortName>ANG-3</shortName>
    </alternativeName>
</protein>
<proteinExistence type="evidence at protein level"/>
<reference key="1">
    <citation type="journal article" date="1999" name="FEBS Lett.">
        <title>Angiopoietin-3, a novel member of the angiopoietin family.</title>
        <authorList>
            <person name="Nishimura M."/>
            <person name="Miki T."/>
            <person name="Yashima R."/>
            <person name="Yokoi N."/>
            <person name="Yano H."/>
            <person name="Sato Y."/>
            <person name="Seino S."/>
        </authorList>
    </citation>
    <scope>NUCLEOTIDE SEQUENCE [MRNA] (ISOFORM 1)</scope>
    <source>
        <tissue>Aorta</tissue>
    </source>
</reference>
<reference key="2">
    <citation type="journal article" date="1999" name="Proc. Natl. Acad. Sci. U.S.A.">
        <title>Angiopoietins 3 and 4: diverging gene counterparts in mice and humans.</title>
        <authorList>
            <person name="Valenzuela D.M."/>
            <person name="Griffiths J.A."/>
            <person name="Rojas J."/>
            <person name="Aldrich T.H."/>
            <person name="Jones P.F."/>
            <person name="Zhou H."/>
            <person name="McClain J."/>
            <person name="Copeland N.G."/>
            <person name="Gilbert D.J."/>
            <person name="Jenkins N.A."/>
            <person name="Huang T."/>
            <person name="Papadopoulos N."/>
            <person name="Maisonpierre P.C."/>
            <person name="Davis S."/>
            <person name="Yancopoulos G.D."/>
        </authorList>
    </citation>
    <scope>NUCLEOTIDE SEQUENCE [MRNA] (ISOFORM 1)</scope>
    <source>
        <tissue>Ovary</tissue>
    </source>
</reference>
<reference key="3">
    <citation type="journal article" date="2004" name="Nat. Genet.">
        <title>Complete sequencing and characterization of 21,243 full-length human cDNAs.</title>
        <authorList>
            <person name="Ota T."/>
            <person name="Suzuki Y."/>
            <person name="Nishikawa T."/>
            <person name="Otsuki T."/>
            <person name="Sugiyama T."/>
            <person name="Irie R."/>
            <person name="Wakamatsu A."/>
            <person name="Hayashi K."/>
            <person name="Sato H."/>
            <person name="Nagai K."/>
            <person name="Kimura K."/>
            <person name="Makita H."/>
            <person name="Sekine M."/>
            <person name="Obayashi M."/>
            <person name="Nishi T."/>
            <person name="Shibahara T."/>
            <person name="Tanaka T."/>
            <person name="Ishii S."/>
            <person name="Yamamoto J."/>
            <person name="Saito K."/>
            <person name="Kawai Y."/>
            <person name="Isono Y."/>
            <person name="Nakamura Y."/>
            <person name="Nagahari K."/>
            <person name="Murakami K."/>
            <person name="Yasuda T."/>
            <person name="Iwayanagi T."/>
            <person name="Wagatsuma M."/>
            <person name="Shiratori A."/>
            <person name="Sudo H."/>
            <person name="Hosoiri T."/>
            <person name="Kaku Y."/>
            <person name="Kodaira H."/>
            <person name="Kondo H."/>
            <person name="Sugawara M."/>
            <person name="Takahashi M."/>
            <person name="Kanda K."/>
            <person name="Yokoi T."/>
            <person name="Furuya T."/>
            <person name="Kikkawa E."/>
            <person name="Omura Y."/>
            <person name="Abe K."/>
            <person name="Kamihara K."/>
            <person name="Katsuta N."/>
            <person name="Sato K."/>
            <person name="Tanikawa M."/>
            <person name="Yamazaki M."/>
            <person name="Ninomiya K."/>
            <person name="Ishibashi T."/>
            <person name="Yamashita H."/>
            <person name="Murakawa K."/>
            <person name="Fujimori K."/>
            <person name="Tanai H."/>
            <person name="Kimata M."/>
            <person name="Watanabe M."/>
            <person name="Hiraoka S."/>
            <person name="Chiba Y."/>
            <person name="Ishida S."/>
            <person name="Ono Y."/>
            <person name="Takiguchi S."/>
            <person name="Watanabe S."/>
            <person name="Yosida M."/>
            <person name="Hotuta T."/>
            <person name="Kusano J."/>
            <person name="Kanehori K."/>
            <person name="Takahashi-Fujii A."/>
            <person name="Hara H."/>
            <person name="Tanase T.-O."/>
            <person name="Nomura Y."/>
            <person name="Togiya S."/>
            <person name="Komai F."/>
            <person name="Hara R."/>
            <person name="Takeuchi K."/>
            <person name="Arita M."/>
            <person name="Imose N."/>
            <person name="Musashino K."/>
            <person name="Yuuki H."/>
            <person name="Oshima A."/>
            <person name="Sasaki N."/>
            <person name="Aotsuka S."/>
            <person name="Yoshikawa Y."/>
            <person name="Matsunawa H."/>
            <person name="Ichihara T."/>
            <person name="Shiohata N."/>
            <person name="Sano S."/>
            <person name="Moriya S."/>
            <person name="Momiyama H."/>
            <person name="Satoh N."/>
            <person name="Takami S."/>
            <person name="Terashima Y."/>
            <person name="Suzuki O."/>
            <person name="Nakagawa S."/>
            <person name="Senoh A."/>
            <person name="Mizoguchi H."/>
            <person name="Goto Y."/>
            <person name="Shimizu F."/>
            <person name="Wakebe H."/>
            <person name="Hishigaki H."/>
            <person name="Watanabe T."/>
            <person name="Sugiyama A."/>
            <person name="Takemoto M."/>
            <person name="Kawakami B."/>
            <person name="Yamazaki M."/>
            <person name="Watanabe K."/>
            <person name="Kumagai A."/>
            <person name="Itakura S."/>
            <person name="Fukuzumi Y."/>
            <person name="Fujimori Y."/>
            <person name="Komiyama M."/>
            <person name="Tashiro H."/>
            <person name="Tanigami A."/>
            <person name="Fujiwara T."/>
            <person name="Ono T."/>
            <person name="Yamada K."/>
            <person name="Fujii Y."/>
            <person name="Ozaki K."/>
            <person name="Hirao M."/>
            <person name="Ohmori Y."/>
            <person name="Kawabata A."/>
            <person name="Hikiji T."/>
            <person name="Kobatake N."/>
            <person name="Inagaki H."/>
            <person name="Ikema Y."/>
            <person name="Okamoto S."/>
            <person name="Okitani R."/>
            <person name="Kawakami T."/>
            <person name="Noguchi S."/>
            <person name="Itoh T."/>
            <person name="Shigeta K."/>
            <person name="Senba T."/>
            <person name="Matsumura K."/>
            <person name="Nakajima Y."/>
            <person name="Mizuno T."/>
            <person name="Morinaga M."/>
            <person name="Sasaki M."/>
            <person name="Togashi T."/>
            <person name="Oyama M."/>
            <person name="Hata H."/>
            <person name="Watanabe M."/>
            <person name="Komatsu T."/>
            <person name="Mizushima-Sugano J."/>
            <person name="Satoh T."/>
            <person name="Shirai Y."/>
            <person name="Takahashi Y."/>
            <person name="Nakagawa K."/>
            <person name="Okumura K."/>
            <person name="Nagase T."/>
            <person name="Nomura N."/>
            <person name="Kikuchi H."/>
            <person name="Masuho Y."/>
            <person name="Yamashita R."/>
            <person name="Nakai K."/>
            <person name="Yada T."/>
            <person name="Nakamura Y."/>
            <person name="Ohara O."/>
            <person name="Isogai T."/>
            <person name="Sugano S."/>
        </authorList>
    </citation>
    <scope>NUCLEOTIDE SEQUENCE [LARGE SCALE MRNA] (ISOFORM 2)</scope>
    <source>
        <tissue>Uterus</tissue>
    </source>
</reference>
<reference key="4">
    <citation type="journal article" date="2001" name="Nature">
        <title>The DNA sequence and comparative analysis of human chromosome 20.</title>
        <authorList>
            <person name="Deloukas P."/>
            <person name="Matthews L.H."/>
            <person name="Ashurst J.L."/>
            <person name="Burton J."/>
            <person name="Gilbert J.G.R."/>
            <person name="Jones M."/>
            <person name="Stavrides G."/>
            <person name="Almeida J.P."/>
            <person name="Babbage A.K."/>
            <person name="Bagguley C.L."/>
            <person name="Bailey J."/>
            <person name="Barlow K.F."/>
            <person name="Bates K.N."/>
            <person name="Beard L.M."/>
            <person name="Beare D.M."/>
            <person name="Beasley O.P."/>
            <person name="Bird C.P."/>
            <person name="Blakey S.E."/>
            <person name="Bridgeman A.M."/>
            <person name="Brown A.J."/>
            <person name="Buck D."/>
            <person name="Burrill W.D."/>
            <person name="Butler A.P."/>
            <person name="Carder C."/>
            <person name="Carter N.P."/>
            <person name="Chapman J.C."/>
            <person name="Clamp M."/>
            <person name="Clark G."/>
            <person name="Clark L.N."/>
            <person name="Clark S.Y."/>
            <person name="Clee C.M."/>
            <person name="Clegg S."/>
            <person name="Cobley V.E."/>
            <person name="Collier R.E."/>
            <person name="Connor R.E."/>
            <person name="Corby N.R."/>
            <person name="Coulson A."/>
            <person name="Coville G.J."/>
            <person name="Deadman R."/>
            <person name="Dhami P.D."/>
            <person name="Dunn M."/>
            <person name="Ellington A.G."/>
            <person name="Frankland J.A."/>
            <person name="Fraser A."/>
            <person name="French L."/>
            <person name="Garner P."/>
            <person name="Grafham D.V."/>
            <person name="Griffiths C."/>
            <person name="Griffiths M.N.D."/>
            <person name="Gwilliam R."/>
            <person name="Hall R.E."/>
            <person name="Hammond S."/>
            <person name="Harley J.L."/>
            <person name="Heath P.D."/>
            <person name="Ho S."/>
            <person name="Holden J.L."/>
            <person name="Howden P.J."/>
            <person name="Huckle E."/>
            <person name="Hunt A.R."/>
            <person name="Hunt S.E."/>
            <person name="Jekosch K."/>
            <person name="Johnson C.M."/>
            <person name="Johnson D."/>
            <person name="Kay M.P."/>
            <person name="Kimberley A.M."/>
            <person name="King A."/>
            <person name="Knights A."/>
            <person name="Laird G.K."/>
            <person name="Lawlor S."/>
            <person name="Lehvaeslaiho M.H."/>
            <person name="Leversha M.A."/>
            <person name="Lloyd C."/>
            <person name="Lloyd D.M."/>
            <person name="Lovell J.D."/>
            <person name="Marsh V.L."/>
            <person name="Martin S.L."/>
            <person name="McConnachie L.J."/>
            <person name="McLay K."/>
            <person name="McMurray A.A."/>
            <person name="Milne S.A."/>
            <person name="Mistry D."/>
            <person name="Moore M.J.F."/>
            <person name="Mullikin J.C."/>
            <person name="Nickerson T."/>
            <person name="Oliver K."/>
            <person name="Parker A."/>
            <person name="Patel R."/>
            <person name="Pearce T.A.V."/>
            <person name="Peck A.I."/>
            <person name="Phillimore B.J.C.T."/>
            <person name="Prathalingam S.R."/>
            <person name="Plumb R.W."/>
            <person name="Ramsay H."/>
            <person name="Rice C.M."/>
            <person name="Ross M.T."/>
            <person name="Scott C.E."/>
            <person name="Sehra H.K."/>
            <person name="Shownkeen R."/>
            <person name="Sims S."/>
            <person name="Skuce C.D."/>
            <person name="Smith M.L."/>
            <person name="Soderlund C."/>
            <person name="Steward C.A."/>
            <person name="Sulston J.E."/>
            <person name="Swann R.M."/>
            <person name="Sycamore N."/>
            <person name="Taylor R."/>
            <person name="Tee L."/>
            <person name="Thomas D.W."/>
            <person name="Thorpe A."/>
            <person name="Tracey A."/>
            <person name="Tromans A.C."/>
            <person name="Vaudin M."/>
            <person name="Wall M."/>
            <person name="Wallis J.M."/>
            <person name="Whitehead S.L."/>
            <person name="Whittaker P."/>
            <person name="Willey D.L."/>
            <person name="Williams L."/>
            <person name="Williams S.A."/>
            <person name="Wilming L."/>
            <person name="Wray P.W."/>
            <person name="Hubbard T."/>
            <person name="Durbin R.M."/>
            <person name="Bentley D.R."/>
            <person name="Beck S."/>
            <person name="Rogers J."/>
        </authorList>
    </citation>
    <scope>NUCLEOTIDE SEQUENCE [LARGE SCALE GENOMIC DNA]</scope>
</reference>
<reference key="5">
    <citation type="journal article" date="2004" name="Genome Res.">
        <title>The status, quality, and expansion of the NIH full-length cDNA project: the Mammalian Gene Collection (MGC).</title>
        <authorList>
            <consortium name="The MGC Project Team"/>
        </authorList>
    </citation>
    <scope>NUCLEOTIDE SEQUENCE [LARGE SCALE MRNA] (ISOFORM 1)</scope>
</reference>
<reference key="6">
    <citation type="journal article" date="2004" name="FASEB J.">
        <title>Biological characterization of angiopoietin-3 and angiopoietin-4.</title>
        <authorList>
            <person name="Lee H.J."/>
            <person name="Cho C.H."/>
            <person name="Hwang S.J."/>
            <person name="Choi H.H."/>
            <person name="Kim K.T."/>
            <person name="Ahn S.Y."/>
            <person name="Kim J.H."/>
            <person name="Oh J.L."/>
            <person name="Lee G.M."/>
            <person name="Koh G.Y."/>
        </authorList>
    </citation>
    <scope>FUNCTION IN REGULATION OF ANGIOGENESIS; CELL SURVIVAL; CELL MIGRATION AND ACTIVATION OF AKT1</scope>
    <scope>SUBUNIT</scope>
    <scope>INTERACTION WITH TEK/TIE2</scope>
</reference>
<reference key="7">
    <citation type="journal article" date="2009" name="Nat. Rev. Mol. Cell Biol.">
        <title>Control of vascular morphogenesis and homeostasis through the angiopoietin-Tie system.</title>
        <authorList>
            <person name="Augustin H.G."/>
            <person name="Koh G.Y."/>
            <person name="Thurston G."/>
            <person name="Alitalo K."/>
        </authorList>
    </citation>
    <scope>REVIEW</scope>
</reference>
<keyword id="KW-0025">Alternative splicing</keyword>
<keyword id="KW-0037">Angiogenesis</keyword>
<keyword id="KW-0175">Coiled coil</keyword>
<keyword id="KW-1015">Disulfide bond</keyword>
<keyword id="KW-0325">Glycoprotein</keyword>
<keyword id="KW-1267">Proteomics identification</keyword>
<keyword id="KW-1185">Reference proteome</keyword>
<keyword id="KW-0964">Secreted</keyword>
<keyword id="KW-0732">Signal</keyword>
<name>ANGP4_HUMAN</name>
<feature type="signal peptide" evidence="1">
    <location>
        <begin position="1"/>
        <end position="24"/>
    </location>
</feature>
<feature type="chain" id="PRO_0000009116" description="Angiopoietin-4">
    <location>
        <begin position="25"/>
        <end position="503"/>
    </location>
</feature>
<feature type="domain" description="Fibrinogen C-terminal" evidence="2">
    <location>
        <begin position="282"/>
        <end position="502"/>
    </location>
</feature>
<feature type="coiled-coil region" evidence="1">
    <location>
        <begin position="84"/>
        <end position="238"/>
    </location>
</feature>
<feature type="glycosylation site" description="N-linked (GlcNAc...) asparagine" evidence="1">
    <location>
        <position position="96"/>
    </location>
</feature>
<feature type="glycosylation site" description="N-linked (GlcNAc...) asparagine" evidence="1">
    <location>
        <position position="126"/>
    </location>
</feature>
<feature type="glycosylation site" description="N-linked (GlcNAc...) asparagine" evidence="1">
    <location>
        <position position="140"/>
    </location>
</feature>
<feature type="glycosylation site" description="N-linked (GlcNAc...) asparagine" evidence="1">
    <location>
        <position position="158"/>
    </location>
</feature>
<feature type="glycosylation site" description="N-linked (GlcNAc...) asparagine" evidence="1">
    <location>
        <position position="247"/>
    </location>
</feature>
<feature type="glycosylation site" description="N-linked (GlcNAc...) asparagine" evidence="1">
    <location>
        <position position="274"/>
    </location>
</feature>
<feature type="glycosylation site" description="N-linked (GlcNAc...) asparagine" evidence="1">
    <location>
        <position position="311"/>
    </location>
</feature>
<feature type="glycosylation site" description="N-linked (GlcNAc...) asparagine" evidence="1">
    <location>
        <position position="337"/>
    </location>
</feature>
<feature type="glycosylation site" description="N-linked (GlcNAc...) asparagine" evidence="1">
    <location>
        <position position="427"/>
    </location>
</feature>
<feature type="disulfide bond" evidence="2">
    <location>
        <begin position="291"/>
        <end position="320"/>
    </location>
</feature>
<feature type="disulfide bond" evidence="2">
    <location>
        <begin position="444"/>
        <end position="457"/>
    </location>
</feature>
<feature type="splice variant" id="VSP_055091" description="In isoform 2." evidence="4">
    <original>LSVVGYSGSAGRQSSLVLQNTSFSTLDSDNDHCLCKCAQVMSGGWWFDACGLSNLNGVYYHAPDNKYKMDGIRWHYFKGPSYSLRASRMMIRPLDI</original>
    <variation>VVV</variation>
    <location>
        <begin position="408"/>
        <end position="503"/>
    </location>
</feature>
<feature type="sequence variant" id="VAR_049070" description="In dbSNP:rs869171.">
    <original>E</original>
    <variation>K</variation>
    <location>
        <position position="395"/>
    </location>
</feature>
<evidence type="ECO:0000255" key="1"/>
<evidence type="ECO:0000255" key="2">
    <source>
        <dbReference type="PROSITE-ProRule" id="PRU00739"/>
    </source>
</evidence>
<evidence type="ECO:0000269" key="3">
    <source>
    </source>
</evidence>
<evidence type="ECO:0000303" key="4">
    <source>
    </source>
</evidence>
<evidence type="ECO:0000305" key="5"/>
<comment type="function">
    <text evidence="3">Binds to TEK/TIE2, modulating ANGPT1 signaling. Can induce tyrosine phosphorylation of TEK/TIE2. Promotes endothelial cell survival, migration and angiogenesis.</text>
</comment>
<comment type="subunit">
    <text evidence="3">Homodimer; disulfide-linked. Interacts with TEK/TIE2.</text>
</comment>
<comment type="subcellular location">
    <subcellularLocation>
        <location evidence="5">Secreted</location>
    </subcellularLocation>
</comment>
<comment type="alternative products">
    <event type="alternative splicing"/>
    <isoform>
        <id>Q9Y264-1</id>
        <name>1</name>
        <sequence type="displayed"/>
    </isoform>
    <isoform>
        <id>Q9Y264-2</id>
        <name>2</name>
        <sequence type="described" ref="VSP_055091"/>
    </isoform>
</comment>
<comment type="tissue specificity">
    <text>Highly expressed in the lung with much lower levels found in other tissues.</text>
</comment>
<organism>
    <name type="scientific">Homo sapiens</name>
    <name type="common">Human</name>
    <dbReference type="NCBI Taxonomy" id="9606"/>
    <lineage>
        <taxon>Eukaryota</taxon>
        <taxon>Metazoa</taxon>
        <taxon>Chordata</taxon>
        <taxon>Craniata</taxon>
        <taxon>Vertebrata</taxon>
        <taxon>Euteleostomi</taxon>
        <taxon>Mammalia</taxon>
        <taxon>Eutheria</taxon>
        <taxon>Euarchontoglires</taxon>
        <taxon>Primates</taxon>
        <taxon>Haplorrhini</taxon>
        <taxon>Catarrhini</taxon>
        <taxon>Hominidae</taxon>
        <taxon>Homo</taxon>
    </lineage>
</organism>
<dbReference type="EMBL" id="AF074332">
    <property type="protein sequence ID" value="AAD31728.1"/>
    <property type="molecule type" value="mRNA"/>
</dbReference>
<dbReference type="EMBL" id="AF113708">
    <property type="protein sequence ID" value="AAD21587.1"/>
    <property type="molecule type" value="mRNA"/>
</dbReference>
<dbReference type="EMBL" id="AK304756">
    <property type="protein sequence ID" value="BAG65511.1"/>
    <property type="molecule type" value="mRNA"/>
</dbReference>
<dbReference type="EMBL" id="AL050325">
    <property type="status" value="NOT_ANNOTATED_CDS"/>
    <property type="molecule type" value="Genomic_DNA"/>
</dbReference>
<dbReference type="EMBL" id="AL161939">
    <property type="status" value="NOT_ANNOTATED_CDS"/>
    <property type="molecule type" value="Genomic_DNA"/>
</dbReference>
<dbReference type="EMBL" id="BC111976">
    <property type="protein sequence ID" value="AAI11977.1"/>
    <property type="molecule type" value="mRNA"/>
</dbReference>
<dbReference type="EMBL" id="BC111978">
    <property type="protein sequence ID" value="AAI11979.1"/>
    <property type="molecule type" value="mRNA"/>
</dbReference>
<dbReference type="CCDS" id="CCDS13009.1">
    <molecule id="Q9Y264-1"/>
</dbReference>
<dbReference type="RefSeq" id="NP_001309738.1">
    <molecule id="Q9Y264-2"/>
    <property type="nucleotide sequence ID" value="NM_001322809.2"/>
</dbReference>
<dbReference type="RefSeq" id="NP_057069.1">
    <molecule id="Q9Y264-1"/>
    <property type="nucleotide sequence ID" value="NM_015985.4"/>
</dbReference>
<dbReference type="SMR" id="Q9Y264"/>
<dbReference type="BioGRID" id="119510">
    <property type="interactions" value="46"/>
</dbReference>
<dbReference type="FunCoup" id="Q9Y264">
    <property type="interactions" value="785"/>
</dbReference>
<dbReference type="IntAct" id="Q9Y264">
    <property type="interactions" value="32"/>
</dbReference>
<dbReference type="STRING" id="9606.ENSP00000371347"/>
<dbReference type="GlyCosmos" id="Q9Y264">
    <property type="glycosylation" value="9 sites, No reported glycans"/>
</dbReference>
<dbReference type="GlyGen" id="Q9Y264">
    <property type="glycosylation" value="9 sites"/>
</dbReference>
<dbReference type="iPTMnet" id="Q9Y264"/>
<dbReference type="PhosphoSitePlus" id="Q9Y264"/>
<dbReference type="BioMuta" id="ANGPT4"/>
<dbReference type="DMDM" id="17433288"/>
<dbReference type="MassIVE" id="Q9Y264"/>
<dbReference type="PaxDb" id="9606-ENSP00000371347"/>
<dbReference type="PeptideAtlas" id="Q9Y264"/>
<dbReference type="ABCD" id="Q9Y264">
    <property type="antibodies" value="10 sequenced antibodies"/>
</dbReference>
<dbReference type="Antibodypedia" id="23019">
    <property type="antibodies" value="279 antibodies from 27 providers"/>
</dbReference>
<dbReference type="DNASU" id="51378"/>
<dbReference type="Ensembl" id="ENST00000381922.5">
    <molecule id="Q9Y264-1"/>
    <property type="protein sequence ID" value="ENSP00000371347.3"/>
    <property type="gene ID" value="ENSG00000101280.8"/>
</dbReference>
<dbReference type="GeneID" id="51378"/>
<dbReference type="KEGG" id="hsa:51378"/>
<dbReference type="MANE-Select" id="ENST00000381922.5">
    <property type="protein sequence ID" value="ENSP00000371347.3"/>
    <property type="RefSeq nucleotide sequence ID" value="NM_015985.4"/>
    <property type="RefSeq protein sequence ID" value="NP_057069.1"/>
</dbReference>
<dbReference type="UCSC" id="uc002wei.4">
    <molecule id="Q9Y264-1"/>
    <property type="organism name" value="human"/>
</dbReference>
<dbReference type="AGR" id="HGNC:487"/>
<dbReference type="CTD" id="51378"/>
<dbReference type="DisGeNET" id="51378"/>
<dbReference type="GeneCards" id="ANGPT4"/>
<dbReference type="HGNC" id="HGNC:487">
    <property type="gene designation" value="ANGPT4"/>
</dbReference>
<dbReference type="HPA" id="ENSG00000101280">
    <property type="expression patterns" value="Tissue enhanced (adipose tissue, breast)"/>
</dbReference>
<dbReference type="MIM" id="603705">
    <property type="type" value="gene"/>
</dbReference>
<dbReference type="neXtProt" id="NX_Q9Y264"/>
<dbReference type="OpenTargets" id="ENSG00000101280"/>
<dbReference type="PharmGKB" id="PA24793"/>
<dbReference type="VEuPathDB" id="HostDB:ENSG00000101280"/>
<dbReference type="eggNOG" id="KOG2579">
    <property type="taxonomic scope" value="Eukaryota"/>
</dbReference>
<dbReference type="GeneTree" id="ENSGT00940000160129"/>
<dbReference type="HOGENOM" id="CLU_038628_3_1_1"/>
<dbReference type="InParanoid" id="Q9Y264"/>
<dbReference type="OMA" id="HAPDNKY"/>
<dbReference type="OrthoDB" id="9933375at2759"/>
<dbReference type="PAN-GO" id="Q9Y264">
    <property type="GO annotations" value="4 GO annotations based on evolutionary models"/>
</dbReference>
<dbReference type="PhylomeDB" id="Q9Y264"/>
<dbReference type="TreeFam" id="TF336658"/>
<dbReference type="PathwayCommons" id="Q9Y264"/>
<dbReference type="Reactome" id="R-HSA-210993">
    <property type="pathway name" value="Tie2 Signaling"/>
</dbReference>
<dbReference type="SignaLink" id="Q9Y264"/>
<dbReference type="SIGNOR" id="Q9Y264"/>
<dbReference type="BioGRID-ORCS" id="51378">
    <property type="hits" value="13 hits in 1144 CRISPR screens"/>
</dbReference>
<dbReference type="ChiTaRS" id="ANGPT4">
    <property type="organism name" value="human"/>
</dbReference>
<dbReference type="GeneWiki" id="ANGPT4"/>
<dbReference type="GenomeRNAi" id="51378"/>
<dbReference type="Pharos" id="Q9Y264">
    <property type="development level" value="Tbio"/>
</dbReference>
<dbReference type="PRO" id="PR:Q9Y264"/>
<dbReference type="Proteomes" id="UP000005640">
    <property type="component" value="Chromosome 20"/>
</dbReference>
<dbReference type="RNAct" id="Q9Y264">
    <property type="molecule type" value="protein"/>
</dbReference>
<dbReference type="Bgee" id="ENSG00000101280">
    <property type="expression patterns" value="Expressed in subcutaneous adipose tissue and 90 other cell types or tissues"/>
</dbReference>
<dbReference type="GO" id="GO:0062023">
    <property type="term" value="C:collagen-containing extracellular matrix"/>
    <property type="evidence" value="ECO:0000318"/>
    <property type="project" value="GO_Central"/>
</dbReference>
<dbReference type="GO" id="GO:0005576">
    <property type="term" value="C:extracellular region"/>
    <property type="evidence" value="ECO:0000304"/>
    <property type="project" value="Reactome"/>
</dbReference>
<dbReference type="GO" id="GO:0005615">
    <property type="term" value="C:extracellular space"/>
    <property type="evidence" value="ECO:0000314"/>
    <property type="project" value="UniProtKB"/>
</dbReference>
<dbReference type="GO" id="GO:0030971">
    <property type="term" value="F:receptor tyrosine kinase binding"/>
    <property type="evidence" value="ECO:0000314"/>
    <property type="project" value="UniProtKB"/>
</dbReference>
<dbReference type="GO" id="GO:0030297">
    <property type="term" value="F:transmembrane receptor protein tyrosine kinase activator activity"/>
    <property type="evidence" value="ECO:0000314"/>
    <property type="project" value="UniProtKB"/>
</dbReference>
<dbReference type="GO" id="GO:0001525">
    <property type="term" value="P:angiogenesis"/>
    <property type="evidence" value="ECO:0007669"/>
    <property type="project" value="UniProtKB-KW"/>
</dbReference>
<dbReference type="GO" id="GO:0007596">
    <property type="term" value="P:blood coagulation"/>
    <property type="evidence" value="ECO:0007669"/>
    <property type="project" value="InterPro"/>
</dbReference>
<dbReference type="GO" id="GO:0071456">
    <property type="term" value="P:cellular response to hypoxia"/>
    <property type="evidence" value="ECO:0000270"/>
    <property type="project" value="UniProtKB"/>
</dbReference>
<dbReference type="GO" id="GO:0016525">
    <property type="term" value="P:negative regulation of angiogenesis"/>
    <property type="evidence" value="ECO:0000314"/>
    <property type="project" value="UniProtKB"/>
</dbReference>
<dbReference type="GO" id="GO:0043066">
    <property type="term" value="P:negative regulation of apoptotic process"/>
    <property type="evidence" value="ECO:0000314"/>
    <property type="project" value="UniProtKB"/>
</dbReference>
<dbReference type="GO" id="GO:0043537">
    <property type="term" value="P:negative regulation of blood vessel endothelial cell migration"/>
    <property type="evidence" value="ECO:0000314"/>
    <property type="project" value="UniProtKB"/>
</dbReference>
<dbReference type="GO" id="GO:0007219">
    <property type="term" value="P:Notch signaling pathway"/>
    <property type="evidence" value="ECO:0007669"/>
    <property type="project" value="Ensembl"/>
</dbReference>
<dbReference type="GO" id="GO:0045766">
    <property type="term" value="P:positive regulation of angiogenesis"/>
    <property type="evidence" value="ECO:0000314"/>
    <property type="project" value="UniProtKB"/>
</dbReference>
<dbReference type="GO" id="GO:0043536">
    <property type="term" value="P:positive regulation of blood vessel endothelial cell migration"/>
    <property type="evidence" value="ECO:0000314"/>
    <property type="project" value="UniProtKB"/>
</dbReference>
<dbReference type="GO" id="GO:0010595">
    <property type="term" value="P:positive regulation of endothelial cell migration"/>
    <property type="evidence" value="ECO:0000314"/>
    <property type="project" value="UniProtKB"/>
</dbReference>
<dbReference type="GO" id="GO:0050731">
    <property type="term" value="P:positive regulation of peptidyl-tyrosine phosphorylation"/>
    <property type="evidence" value="ECO:0000314"/>
    <property type="project" value="UniProtKB"/>
</dbReference>
<dbReference type="GO" id="GO:0007165">
    <property type="term" value="P:signal transduction"/>
    <property type="evidence" value="ECO:0000318"/>
    <property type="project" value="GO_Central"/>
</dbReference>
<dbReference type="CDD" id="cd00087">
    <property type="entry name" value="FReD"/>
    <property type="match status" value="1"/>
</dbReference>
<dbReference type="FunFam" id="3.90.215.10:FF:000001">
    <property type="entry name" value="Tenascin isoform 1"/>
    <property type="match status" value="1"/>
</dbReference>
<dbReference type="Gene3D" id="3.90.215.10">
    <property type="entry name" value="Gamma Fibrinogen, chain A, domain 1"/>
    <property type="match status" value="1"/>
</dbReference>
<dbReference type="InterPro" id="IPR037579">
    <property type="entry name" value="FIB_ANG-like"/>
</dbReference>
<dbReference type="InterPro" id="IPR036056">
    <property type="entry name" value="Fibrinogen-like_C"/>
</dbReference>
<dbReference type="InterPro" id="IPR014716">
    <property type="entry name" value="Fibrinogen_a/b/g_C_1"/>
</dbReference>
<dbReference type="InterPro" id="IPR002181">
    <property type="entry name" value="Fibrinogen_a/b/g_C_dom"/>
</dbReference>
<dbReference type="InterPro" id="IPR020837">
    <property type="entry name" value="Fibrinogen_CS"/>
</dbReference>
<dbReference type="NCBIfam" id="NF040941">
    <property type="entry name" value="GGGWT_bact"/>
    <property type="match status" value="1"/>
</dbReference>
<dbReference type="PANTHER" id="PTHR47221">
    <property type="entry name" value="FIBRINOGEN ALPHA CHAIN"/>
    <property type="match status" value="1"/>
</dbReference>
<dbReference type="PANTHER" id="PTHR47221:SF6">
    <property type="entry name" value="FIBRINOGEN ALPHA CHAIN"/>
    <property type="match status" value="1"/>
</dbReference>
<dbReference type="Pfam" id="PF25443">
    <property type="entry name" value="ANG-1"/>
    <property type="match status" value="1"/>
</dbReference>
<dbReference type="Pfam" id="PF00147">
    <property type="entry name" value="Fibrinogen_C"/>
    <property type="match status" value="1"/>
</dbReference>
<dbReference type="SMART" id="SM00186">
    <property type="entry name" value="FBG"/>
    <property type="match status" value="1"/>
</dbReference>
<dbReference type="SUPFAM" id="SSF56496">
    <property type="entry name" value="Fibrinogen C-terminal domain-like"/>
    <property type="match status" value="1"/>
</dbReference>
<dbReference type="PROSITE" id="PS00514">
    <property type="entry name" value="FIBRINOGEN_C_1"/>
    <property type="match status" value="1"/>
</dbReference>
<dbReference type="PROSITE" id="PS51406">
    <property type="entry name" value="FIBRINOGEN_C_2"/>
    <property type="match status" value="1"/>
</dbReference>
<sequence length="503" mass="56849">MLSQLAMLQGSLLLVVATMSVAQQTRQEADRGCETLVVQHGHCSYTFLLPKSEPCPPGPEVSRDSNTLQRESLANPLHLGKLPTQQVKQLEQALQNNTQWLKKLERAIKTILRSKLEQVQQQMAQNQTAPMLELGTSLLNQTTAQIRKLTDMEAQLLNQTSRMDAQMPETFLSTNKLENQLLLQRQKLQQLQGQNSALEKRLQALETKQQEELASILSKKAKLLNTLSRQSAALTNIERGLRGVRHNSSLLQDQQHSLRQLLVLLRHLVQERANASAPAFIMAGEQVFQDCAEIQRSGASASGVYTIQVSNATKPRKVFCDLQSSGGRWTLIQRRENGTVNFQRNWKDYKQGFGDPAGEHWLGNEVVHQLTRRAAYSLRVELQDWEGHEAYAQYEHFHLGSENQLYRLSVVGYSGSAGRQSSLVLQNTSFSTLDSDNDHCLCKCAQVMSGGWWFDACGLSNLNGVYYHAPDNKYKMDGIRWHYFKGPSYSLRASRMMIRPLDI</sequence>